<evidence type="ECO:0000250" key="1"/>
<evidence type="ECO:0000305" key="2"/>
<comment type="function">
    <text evidence="1">Essential for spermiogenesis.</text>
</comment>
<comment type="subunit">
    <text evidence="1">Interacts with PACRG.</text>
</comment>
<comment type="similarity">
    <text evidence="2">Belongs to the MEIG1 family.</text>
</comment>
<feature type="chain" id="PRO_0000313024" description="Meiosis expressed gene 1 protein homolog">
    <location>
        <begin position="1"/>
        <end position="88"/>
    </location>
</feature>
<dbReference type="EMBL" id="BC109557">
    <property type="protein sequence ID" value="AAI09558.1"/>
    <property type="molecule type" value="mRNA"/>
</dbReference>
<dbReference type="RefSeq" id="NP_001107996.2">
    <property type="nucleotide sequence ID" value="NM_001114524.2"/>
</dbReference>
<dbReference type="RefSeq" id="NP_001231235.1">
    <property type="nucleotide sequence ID" value="NM_001244306.1"/>
</dbReference>
<dbReference type="RefSeq" id="XP_024856591.1">
    <property type="nucleotide sequence ID" value="XM_025000823.2"/>
</dbReference>
<dbReference type="RefSeq" id="XP_059748748.1">
    <property type="nucleotide sequence ID" value="XM_059892765.1"/>
</dbReference>
<dbReference type="RefSeq" id="XP_059748749.1">
    <property type="nucleotide sequence ID" value="XM_059892766.1"/>
</dbReference>
<dbReference type="SMR" id="Q32LI5"/>
<dbReference type="FunCoup" id="Q32LI5">
    <property type="interactions" value="20"/>
</dbReference>
<dbReference type="STRING" id="9913.ENSBTAP00000003703"/>
<dbReference type="PaxDb" id="9913-ENSBTAP00000003703"/>
<dbReference type="GeneID" id="617353"/>
<dbReference type="KEGG" id="bta:617353"/>
<dbReference type="CTD" id="644890"/>
<dbReference type="eggNOG" id="ENOG502S7BQ">
    <property type="taxonomic scope" value="Eukaryota"/>
</dbReference>
<dbReference type="HOGENOM" id="CLU_160103_0_0_1"/>
<dbReference type="InParanoid" id="Q32LI5"/>
<dbReference type="OrthoDB" id="10023051at2759"/>
<dbReference type="TreeFam" id="TF329080"/>
<dbReference type="Proteomes" id="UP000009136">
    <property type="component" value="Unplaced"/>
</dbReference>
<dbReference type="GO" id="GO:0005634">
    <property type="term" value="C:nucleus"/>
    <property type="evidence" value="ECO:0000318"/>
    <property type="project" value="GO_Central"/>
</dbReference>
<dbReference type="GO" id="GO:0030154">
    <property type="term" value="P:cell differentiation"/>
    <property type="evidence" value="ECO:0007669"/>
    <property type="project" value="UniProtKB-KW"/>
</dbReference>
<dbReference type="GO" id="GO:0007283">
    <property type="term" value="P:spermatogenesis"/>
    <property type="evidence" value="ECO:0007669"/>
    <property type="project" value="UniProtKB-KW"/>
</dbReference>
<dbReference type="InterPro" id="IPR020186">
    <property type="entry name" value="Meiosis-expressed_gene_1"/>
</dbReference>
<dbReference type="PANTHER" id="PTHR17008:SF1">
    <property type="entry name" value="MEIOSIS EXPRESSED GENE 1 PROTEIN HOMOLOG"/>
    <property type="match status" value="1"/>
</dbReference>
<dbReference type="PANTHER" id="PTHR17008">
    <property type="entry name" value="MEIOSIS-EXPRESSED GENE 1 PROTEIN"/>
    <property type="match status" value="1"/>
</dbReference>
<dbReference type="Pfam" id="PF15163">
    <property type="entry name" value="Meiosis_expr"/>
    <property type="match status" value="1"/>
</dbReference>
<sequence length="88" mass="10839">MANSDVKPKSISRAKKWSEEIENLYRFQQAGYRDEIEYKQVKQVSMVDRWPETGYVKKLQRRDNTFYYYNKQRECDDKEVHKVKIYAY</sequence>
<organism>
    <name type="scientific">Bos taurus</name>
    <name type="common">Bovine</name>
    <dbReference type="NCBI Taxonomy" id="9913"/>
    <lineage>
        <taxon>Eukaryota</taxon>
        <taxon>Metazoa</taxon>
        <taxon>Chordata</taxon>
        <taxon>Craniata</taxon>
        <taxon>Vertebrata</taxon>
        <taxon>Euteleostomi</taxon>
        <taxon>Mammalia</taxon>
        <taxon>Eutheria</taxon>
        <taxon>Laurasiatheria</taxon>
        <taxon>Artiodactyla</taxon>
        <taxon>Ruminantia</taxon>
        <taxon>Pecora</taxon>
        <taxon>Bovidae</taxon>
        <taxon>Bovinae</taxon>
        <taxon>Bos</taxon>
    </lineage>
</organism>
<proteinExistence type="inferred from homology"/>
<keyword id="KW-0221">Differentiation</keyword>
<keyword id="KW-1185">Reference proteome</keyword>
<keyword id="KW-0744">Spermatogenesis</keyword>
<name>MEIG1_BOVIN</name>
<gene>
    <name type="primary">MEIG1</name>
</gene>
<protein>
    <recommendedName>
        <fullName>Meiosis expressed gene 1 protein homolog</fullName>
    </recommendedName>
</protein>
<accession>Q32LI5</accession>
<reference key="1">
    <citation type="submission" date="2005-11" db="EMBL/GenBank/DDBJ databases">
        <authorList>
            <consortium name="NIH - Mammalian Gene Collection (MGC) project"/>
        </authorList>
    </citation>
    <scope>NUCLEOTIDE SEQUENCE [LARGE SCALE MRNA]</scope>
    <source>
        <strain>Crossbred X Angus</strain>
        <tissue>Liver</tissue>
    </source>
</reference>